<reference key="1">
    <citation type="journal article" date="2009" name="J. Bacteriol.">
        <title>Genomic sequencing reveals regulatory mutations and recombinational events in the widely used MC4100 lineage of Escherichia coli K-12.</title>
        <authorList>
            <person name="Ferenci T."/>
            <person name="Zhou Z."/>
            <person name="Betteridge T."/>
            <person name="Ren Y."/>
            <person name="Liu Y."/>
            <person name="Feng L."/>
            <person name="Reeves P.R."/>
            <person name="Wang L."/>
        </authorList>
    </citation>
    <scope>NUCLEOTIDE SEQUENCE [LARGE SCALE GENOMIC DNA]</scope>
    <source>
        <strain>K12 / MC4100 / BW2952</strain>
    </source>
</reference>
<proteinExistence type="inferred from homology"/>
<comment type="function">
    <text evidence="1">F(1)F(0) ATP synthase produces ATP from ADP in the presence of a proton or sodium gradient. F-type ATPases consist of two structural domains, F(1) containing the extramembraneous catalytic core and F(0) containing the membrane proton channel, linked together by a central stalk and a peripheral stalk. During catalysis, ATP synthesis in the catalytic domain of F(1) is coupled via a rotary mechanism of the central stalk subunits to proton translocation.</text>
</comment>
<comment type="function">
    <text evidence="1">Key component of the F(0) channel; it plays a direct role in translocation across the membrane. A homomeric c-ring of between 10-14 subunits forms the central stalk rotor element with the F(1) delta and epsilon subunits.</text>
</comment>
<comment type="subunit">
    <text evidence="1">F-type ATPases have 2 components, F(1) - the catalytic core - and F(0) - the membrane proton channel. F(1) has five subunits: alpha(3), beta(3), gamma(1), delta(1), epsilon(1). F(0) has three main subunits: a(1), b(2) and c(10-14). The alpha and beta chains form an alternating ring which encloses part of the gamma chain. F(1) is attached to F(0) by a central stalk formed by the gamma and epsilon chains, while a peripheral stalk is formed by the delta and b chains.</text>
</comment>
<comment type="subcellular location">
    <subcellularLocation>
        <location evidence="1">Cell inner membrane</location>
        <topology evidence="1">Multi-pass membrane protein</topology>
    </subcellularLocation>
</comment>
<comment type="similarity">
    <text evidence="1">Belongs to the ATPase C chain family.</text>
</comment>
<name>ATPL_ECOBW</name>
<gene>
    <name evidence="1" type="primary">atpE</name>
    <name type="ordered locus">BWG_3428</name>
</gene>
<sequence>MENLNMDLLYMAAAVMMGLAAIGAAIGIGILGGKFLEGAARQPDLIPLLRTQFFIVMGLVDAIPMIAVGLGLYVMFAVA</sequence>
<accession>C4ZZ15</accession>
<protein>
    <recommendedName>
        <fullName evidence="1">ATP synthase subunit c</fullName>
    </recommendedName>
    <alternativeName>
        <fullName evidence="1">ATP synthase F(0) sector subunit c</fullName>
    </alternativeName>
    <alternativeName>
        <fullName evidence="1">F-type ATPase subunit c</fullName>
        <shortName evidence="1">F-ATPase subunit c</shortName>
    </alternativeName>
    <alternativeName>
        <fullName evidence="1">Lipid-binding protein</fullName>
    </alternativeName>
</protein>
<keyword id="KW-0066">ATP synthesis</keyword>
<keyword id="KW-0997">Cell inner membrane</keyword>
<keyword id="KW-1003">Cell membrane</keyword>
<keyword id="KW-0138">CF(0)</keyword>
<keyword id="KW-0375">Hydrogen ion transport</keyword>
<keyword id="KW-0406">Ion transport</keyword>
<keyword id="KW-0446">Lipid-binding</keyword>
<keyword id="KW-0472">Membrane</keyword>
<keyword id="KW-0812">Transmembrane</keyword>
<keyword id="KW-1133">Transmembrane helix</keyword>
<keyword id="KW-0813">Transport</keyword>
<evidence type="ECO:0000255" key="1">
    <source>
        <dbReference type="HAMAP-Rule" id="MF_01396"/>
    </source>
</evidence>
<organism>
    <name type="scientific">Escherichia coli (strain K12 / MC4100 / BW2952)</name>
    <dbReference type="NCBI Taxonomy" id="595496"/>
    <lineage>
        <taxon>Bacteria</taxon>
        <taxon>Pseudomonadati</taxon>
        <taxon>Pseudomonadota</taxon>
        <taxon>Gammaproteobacteria</taxon>
        <taxon>Enterobacterales</taxon>
        <taxon>Enterobacteriaceae</taxon>
        <taxon>Escherichia</taxon>
    </lineage>
</organism>
<feature type="chain" id="PRO_1000215158" description="ATP synthase subunit c">
    <location>
        <begin position="1"/>
        <end position="79"/>
    </location>
</feature>
<feature type="transmembrane region" description="Helical" evidence="1">
    <location>
        <begin position="11"/>
        <end position="31"/>
    </location>
</feature>
<feature type="transmembrane region" description="Helical" evidence="1">
    <location>
        <begin position="53"/>
        <end position="73"/>
    </location>
</feature>
<feature type="site" description="Reversibly protonated during proton transport" evidence="1">
    <location>
        <position position="61"/>
    </location>
</feature>
<dbReference type="EMBL" id="CP001396">
    <property type="protein sequence ID" value="ACR63064.1"/>
    <property type="molecule type" value="Genomic_DNA"/>
</dbReference>
<dbReference type="RefSeq" id="WP_000429386.1">
    <property type="nucleotide sequence ID" value="NC_012759.1"/>
</dbReference>
<dbReference type="SMR" id="C4ZZ15"/>
<dbReference type="GeneID" id="98390858"/>
<dbReference type="KEGG" id="ebw:BWG_3428"/>
<dbReference type="HOGENOM" id="CLU_148047_1_0_6"/>
<dbReference type="GO" id="GO:0005886">
    <property type="term" value="C:plasma membrane"/>
    <property type="evidence" value="ECO:0007669"/>
    <property type="project" value="UniProtKB-SubCell"/>
</dbReference>
<dbReference type="GO" id="GO:0045259">
    <property type="term" value="C:proton-transporting ATP synthase complex"/>
    <property type="evidence" value="ECO:0007669"/>
    <property type="project" value="UniProtKB-KW"/>
</dbReference>
<dbReference type="GO" id="GO:0033177">
    <property type="term" value="C:proton-transporting two-sector ATPase complex, proton-transporting domain"/>
    <property type="evidence" value="ECO:0007669"/>
    <property type="project" value="InterPro"/>
</dbReference>
<dbReference type="GO" id="GO:0008289">
    <property type="term" value="F:lipid binding"/>
    <property type="evidence" value="ECO:0007669"/>
    <property type="project" value="UniProtKB-KW"/>
</dbReference>
<dbReference type="GO" id="GO:0046933">
    <property type="term" value="F:proton-transporting ATP synthase activity, rotational mechanism"/>
    <property type="evidence" value="ECO:0007669"/>
    <property type="project" value="UniProtKB-UniRule"/>
</dbReference>
<dbReference type="CDD" id="cd18185">
    <property type="entry name" value="ATP-synt_Fo_c_ATPE"/>
    <property type="match status" value="1"/>
</dbReference>
<dbReference type="FunFam" id="1.20.20.10:FF:000002">
    <property type="entry name" value="ATP synthase subunit c"/>
    <property type="match status" value="1"/>
</dbReference>
<dbReference type="Gene3D" id="1.20.20.10">
    <property type="entry name" value="F1F0 ATP synthase subunit C"/>
    <property type="match status" value="1"/>
</dbReference>
<dbReference type="HAMAP" id="MF_01396">
    <property type="entry name" value="ATP_synth_c_bact"/>
    <property type="match status" value="1"/>
</dbReference>
<dbReference type="InterPro" id="IPR005953">
    <property type="entry name" value="ATP_synth_csu_bac/chlpt"/>
</dbReference>
<dbReference type="InterPro" id="IPR000454">
    <property type="entry name" value="ATP_synth_F0_csu"/>
</dbReference>
<dbReference type="InterPro" id="IPR020537">
    <property type="entry name" value="ATP_synth_F0_csu_DDCD_BS"/>
</dbReference>
<dbReference type="InterPro" id="IPR038662">
    <property type="entry name" value="ATP_synth_F0_csu_sf"/>
</dbReference>
<dbReference type="InterPro" id="IPR002379">
    <property type="entry name" value="ATPase_proteolipid_c-like_dom"/>
</dbReference>
<dbReference type="InterPro" id="IPR035921">
    <property type="entry name" value="F/V-ATP_Csub_sf"/>
</dbReference>
<dbReference type="NCBIfam" id="TIGR01260">
    <property type="entry name" value="ATP_synt_c"/>
    <property type="match status" value="1"/>
</dbReference>
<dbReference type="NCBIfam" id="NF005363">
    <property type="entry name" value="PRK06876.1"/>
    <property type="match status" value="1"/>
</dbReference>
<dbReference type="Pfam" id="PF00137">
    <property type="entry name" value="ATP-synt_C"/>
    <property type="match status" value="1"/>
</dbReference>
<dbReference type="PRINTS" id="PR00124">
    <property type="entry name" value="ATPASEC"/>
</dbReference>
<dbReference type="SUPFAM" id="SSF81333">
    <property type="entry name" value="F1F0 ATP synthase subunit C"/>
    <property type="match status" value="1"/>
</dbReference>
<dbReference type="PROSITE" id="PS00605">
    <property type="entry name" value="ATPASE_C"/>
    <property type="match status" value="1"/>
</dbReference>